<sequence length="231" mass="25981">MADDRVAGGATPPPPPPPPPLDASAFTHTPYYCEENVHLLCKELIRSGISDPAGTDLYAVFISNEEKKVPLWYQKASHSGDGFVLWDYHVICIQSRRKNGEVLDLVWDLDSSLPFPCSFIQYVSDAIRPLSFGNSTYRRLFRVIHAPVFLRSFASDRSHMKDHAGNWIQLPPKYESIVAEDGTTNNLNEYITMSMDDVKDLESMADDVYSSKHGVVINETILPEFFSRLPG</sequence>
<comment type="function">
    <text evidence="2">Mediates the side-chain deamidation of N-terminal glutamine residues to glutamate, an important step in N-end rule pathway of protein degradation. Conversion of the resulting N-terminal glutamine to glutamate renders the protein susceptible to arginylation, polyubiquitination and degradation as specified by the N-end rule. Does not act on substrates with internal or C-terminal glutamine and does not act on non-glutamine residues in any position.</text>
</comment>
<comment type="catalytic activity">
    <reaction evidence="2">
        <text>N-terminal L-glutaminyl-[protein] + H2O = N-terminal L-glutamyl-[protein] + NH4(+)</text>
        <dbReference type="Rhea" id="RHEA:50680"/>
        <dbReference type="Rhea" id="RHEA-COMP:12668"/>
        <dbReference type="Rhea" id="RHEA-COMP:12777"/>
        <dbReference type="ChEBI" id="CHEBI:15377"/>
        <dbReference type="ChEBI" id="CHEBI:28938"/>
        <dbReference type="ChEBI" id="CHEBI:64721"/>
        <dbReference type="ChEBI" id="CHEBI:64722"/>
        <dbReference type="EC" id="3.5.1.122"/>
    </reaction>
</comment>
<comment type="subunit">
    <text evidence="3">Monomer.</text>
</comment>
<comment type="similarity">
    <text evidence="5">Belongs to the NTAQ1 family.</text>
</comment>
<gene>
    <name type="ORF">OsI_19806</name>
</gene>
<dbReference type="EC" id="3.5.1.122" evidence="2"/>
<dbReference type="EMBL" id="CM000130">
    <property type="protein sequence ID" value="EEC79144.1"/>
    <property type="molecule type" value="Genomic_DNA"/>
</dbReference>
<dbReference type="SMR" id="B8AXU2"/>
<dbReference type="STRING" id="39946.B8AXU2"/>
<dbReference type="EnsemblPlants" id="BGIOSGA018127-TA">
    <property type="protein sequence ID" value="BGIOSGA018127-PA"/>
    <property type="gene ID" value="BGIOSGA018127"/>
</dbReference>
<dbReference type="Gramene" id="BGIOSGA018127-TA">
    <property type="protein sequence ID" value="BGIOSGA018127-PA"/>
    <property type="gene ID" value="BGIOSGA018127"/>
</dbReference>
<dbReference type="HOGENOM" id="CLU_091083_2_0_1"/>
<dbReference type="OMA" id="GWGTVYS"/>
<dbReference type="Proteomes" id="UP000007015">
    <property type="component" value="Chromosome 5"/>
</dbReference>
<dbReference type="GO" id="GO:0005829">
    <property type="term" value="C:cytosol"/>
    <property type="evidence" value="ECO:0007669"/>
    <property type="project" value="TreeGrafter"/>
</dbReference>
<dbReference type="GO" id="GO:0005634">
    <property type="term" value="C:nucleus"/>
    <property type="evidence" value="ECO:0007669"/>
    <property type="project" value="TreeGrafter"/>
</dbReference>
<dbReference type="GO" id="GO:0008418">
    <property type="term" value="F:protein-N-terminal asparagine amidohydrolase activity"/>
    <property type="evidence" value="ECO:0007669"/>
    <property type="project" value="InterPro"/>
</dbReference>
<dbReference type="GO" id="GO:0070773">
    <property type="term" value="F:protein-N-terminal glutamine amidohydrolase activity"/>
    <property type="evidence" value="ECO:0007669"/>
    <property type="project" value="UniProtKB-EC"/>
</dbReference>
<dbReference type="GO" id="GO:0042742">
    <property type="term" value="P:defense response to bacterium"/>
    <property type="evidence" value="ECO:0007669"/>
    <property type="project" value="EnsemblPlants"/>
</dbReference>
<dbReference type="GO" id="GO:1901183">
    <property type="term" value="P:positive regulation of camalexin biosynthetic process"/>
    <property type="evidence" value="ECO:0007669"/>
    <property type="project" value="EnsemblPlants"/>
</dbReference>
<dbReference type="FunFam" id="3.10.620.10:FF:000001">
    <property type="entry name" value="Blast:Protein N-terminal glutamine amidohydrolase"/>
    <property type="match status" value="1"/>
</dbReference>
<dbReference type="Gene3D" id="3.10.620.10">
    <property type="entry name" value="Protein N-terminal glutamine amidohydrolase, alpha beta roll"/>
    <property type="match status" value="1"/>
</dbReference>
<dbReference type="InterPro" id="IPR037132">
    <property type="entry name" value="N_Gln_amidohydro_ab_roll_sf"/>
</dbReference>
<dbReference type="InterPro" id="IPR039733">
    <property type="entry name" value="NTAQ1"/>
</dbReference>
<dbReference type="InterPro" id="IPR023128">
    <property type="entry name" value="Prot_N_Gln_amidohydro_ab_roll"/>
</dbReference>
<dbReference type="PANTHER" id="PTHR13035">
    <property type="entry name" value="PROTEIN N-TERMINAL GLUTAMINE AMIDOHYDROLASE"/>
    <property type="match status" value="1"/>
</dbReference>
<dbReference type="PANTHER" id="PTHR13035:SF0">
    <property type="entry name" value="PROTEIN N-TERMINAL GLUTAMINE AMIDOHYDROLASE"/>
    <property type="match status" value="1"/>
</dbReference>
<dbReference type="Pfam" id="PF09764">
    <property type="entry name" value="Nt_Gln_amidase"/>
    <property type="match status" value="1"/>
</dbReference>
<proteinExistence type="inferred from homology"/>
<accession>B8AXU2</accession>
<feature type="chain" id="PRO_0000381835" description="Protein N-terminal glutamine amidohydrolase">
    <location>
        <begin position="1"/>
        <end position="231"/>
    </location>
</feature>
<feature type="region of interest" description="Disordered" evidence="4">
    <location>
        <begin position="1"/>
        <end position="21"/>
    </location>
</feature>
<feature type="compositionally biased region" description="Pro residues" evidence="4">
    <location>
        <begin position="11"/>
        <end position="21"/>
    </location>
</feature>
<feature type="active site" evidence="1">
    <location>
        <position position="33"/>
    </location>
</feature>
<feature type="active site" evidence="1">
    <location>
        <position position="89"/>
    </location>
</feature>
<feature type="active site" evidence="1">
    <location>
        <position position="108"/>
    </location>
</feature>
<name>NTAQ1_ORYSI</name>
<evidence type="ECO:0000250" key="1"/>
<evidence type="ECO:0000250" key="2">
    <source>
        <dbReference type="UniProtKB" id="Q80WB5"/>
    </source>
</evidence>
<evidence type="ECO:0000250" key="3">
    <source>
        <dbReference type="UniProtKB" id="Q96HA8"/>
    </source>
</evidence>
<evidence type="ECO:0000256" key="4">
    <source>
        <dbReference type="SAM" id="MobiDB-lite"/>
    </source>
</evidence>
<evidence type="ECO:0000305" key="5"/>
<organism>
    <name type="scientific">Oryza sativa subsp. indica</name>
    <name type="common">Rice</name>
    <dbReference type="NCBI Taxonomy" id="39946"/>
    <lineage>
        <taxon>Eukaryota</taxon>
        <taxon>Viridiplantae</taxon>
        <taxon>Streptophyta</taxon>
        <taxon>Embryophyta</taxon>
        <taxon>Tracheophyta</taxon>
        <taxon>Spermatophyta</taxon>
        <taxon>Magnoliopsida</taxon>
        <taxon>Liliopsida</taxon>
        <taxon>Poales</taxon>
        <taxon>Poaceae</taxon>
        <taxon>BOP clade</taxon>
        <taxon>Oryzoideae</taxon>
        <taxon>Oryzeae</taxon>
        <taxon>Oryzinae</taxon>
        <taxon>Oryza</taxon>
        <taxon>Oryza sativa</taxon>
    </lineage>
</organism>
<reference key="1">
    <citation type="journal article" date="2005" name="PLoS Biol.">
        <title>The genomes of Oryza sativa: a history of duplications.</title>
        <authorList>
            <person name="Yu J."/>
            <person name="Wang J."/>
            <person name="Lin W."/>
            <person name="Li S."/>
            <person name="Li H."/>
            <person name="Zhou J."/>
            <person name="Ni P."/>
            <person name="Dong W."/>
            <person name="Hu S."/>
            <person name="Zeng C."/>
            <person name="Zhang J."/>
            <person name="Zhang Y."/>
            <person name="Li R."/>
            <person name="Xu Z."/>
            <person name="Li S."/>
            <person name="Li X."/>
            <person name="Zheng H."/>
            <person name="Cong L."/>
            <person name="Lin L."/>
            <person name="Yin J."/>
            <person name="Geng J."/>
            <person name="Li G."/>
            <person name="Shi J."/>
            <person name="Liu J."/>
            <person name="Lv H."/>
            <person name="Li J."/>
            <person name="Wang J."/>
            <person name="Deng Y."/>
            <person name="Ran L."/>
            <person name="Shi X."/>
            <person name="Wang X."/>
            <person name="Wu Q."/>
            <person name="Li C."/>
            <person name="Ren X."/>
            <person name="Wang J."/>
            <person name="Wang X."/>
            <person name="Li D."/>
            <person name="Liu D."/>
            <person name="Zhang X."/>
            <person name="Ji Z."/>
            <person name="Zhao W."/>
            <person name="Sun Y."/>
            <person name="Zhang Z."/>
            <person name="Bao J."/>
            <person name="Han Y."/>
            <person name="Dong L."/>
            <person name="Ji J."/>
            <person name="Chen P."/>
            <person name="Wu S."/>
            <person name="Liu J."/>
            <person name="Xiao Y."/>
            <person name="Bu D."/>
            <person name="Tan J."/>
            <person name="Yang L."/>
            <person name="Ye C."/>
            <person name="Zhang J."/>
            <person name="Xu J."/>
            <person name="Zhou Y."/>
            <person name="Yu Y."/>
            <person name="Zhang B."/>
            <person name="Zhuang S."/>
            <person name="Wei H."/>
            <person name="Liu B."/>
            <person name="Lei M."/>
            <person name="Yu H."/>
            <person name="Li Y."/>
            <person name="Xu H."/>
            <person name="Wei S."/>
            <person name="He X."/>
            <person name="Fang L."/>
            <person name="Zhang Z."/>
            <person name="Zhang Y."/>
            <person name="Huang X."/>
            <person name="Su Z."/>
            <person name="Tong W."/>
            <person name="Li J."/>
            <person name="Tong Z."/>
            <person name="Li S."/>
            <person name="Ye J."/>
            <person name="Wang L."/>
            <person name="Fang L."/>
            <person name="Lei T."/>
            <person name="Chen C.-S."/>
            <person name="Chen H.-C."/>
            <person name="Xu Z."/>
            <person name="Li H."/>
            <person name="Huang H."/>
            <person name="Zhang F."/>
            <person name="Xu H."/>
            <person name="Li N."/>
            <person name="Zhao C."/>
            <person name="Li S."/>
            <person name="Dong L."/>
            <person name="Huang Y."/>
            <person name="Li L."/>
            <person name="Xi Y."/>
            <person name="Qi Q."/>
            <person name="Li W."/>
            <person name="Zhang B."/>
            <person name="Hu W."/>
            <person name="Zhang Y."/>
            <person name="Tian X."/>
            <person name="Jiao Y."/>
            <person name="Liang X."/>
            <person name="Jin J."/>
            <person name="Gao L."/>
            <person name="Zheng W."/>
            <person name="Hao B."/>
            <person name="Liu S.-M."/>
            <person name="Wang W."/>
            <person name="Yuan L."/>
            <person name="Cao M."/>
            <person name="McDermott J."/>
            <person name="Samudrala R."/>
            <person name="Wang J."/>
            <person name="Wong G.K.-S."/>
            <person name="Yang H."/>
        </authorList>
    </citation>
    <scope>NUCLEOTIDE SEQUENCE [LARGE SCALE GENOMIC DNA]</scope>
    <source>
        <strain>cv. 93-11</strain>
    </source>
</reference>
<keyword id="KW-0378">Hydrolase</keyword>
<keyword id="KW-1185">Reference proteome</keyword>
<protein>
    <recommendedName>
        <fullName>Protein N-terminal glutamine amidohydrolase</fullName>
        <ecNumber evidence="2">3.5.1.122</ecNumber>
    </recommendedName>
    <alternativeName>
        <fullName>Protein NH2-terminal glutamine deamidase</fullName>
        <shortName>N-terminal Gln amidase</shortName>
        <shortName>Nt(Q)-amidase</shortName>
    </alternativeName>
</protein>